<sequence>MAVYDQSGDRNRTQIDTSRKRKSRSRGDGTTVAERLKRWKEYNETVEEVSTKKRKVPAKGSKKGCMKGKGGPENSRCSFRGVRQRIWGKWVAEIREPNRGSRLWLGTFPTAQEAASAYDEAAKAMYGPLARLNFPRSDASEVTSTSSQSEVCTVETPGCVHVKTEDPDCESKPFSGGVEPMYCLENGAEEMKRGVKADKHWLSEFEHNYWSDILKEKEKQKEQGIVETCQQQQQDSLSVADYGWPNDVDQSHLDSSDMFDVDELLRDLNGDDVFAGLNQDRYPGNSVANGSYRPESQQSGFDPLQSLNYGIPPFQLEGKDGNGFFDDLSYLDLEN</sequence>
<evidence type="ECO:0000255" key="1"/>
<evidence type="ECO:0000255" key="2">
    <source>
        <dbReference type="PROSITE-ProRule" id="PRU00366"/>
    </source>
</evidence>
<evidence type="ECO:0000256" key="3">
    <source>
        <dbReference type="SAM" id="MobiDB-lite"/>
    </source>
</evidence>
<evidence type="ECO:0000269" key="4">
    <source>
    </source>
</evidence>
<evidence type="ECO:0000269" key="5">
    <source>
    </source>
</evidence>
<evidence type="ECO:0000269" key="6">
    <source>
    </source>
</evidence>
<evidence type="ECO:0000269" key="7">
    <source>
    </source>
</evidence>
<evidence type="ECO:0000269" key="8">
    <source>
    </source>
</evidence>
<evidence type="ECO:0000269" key="9">
    <source>
    </source>
</evidence>
<evidence type="ECO:0000303" key="10">
    <source>
    </source>
</evidence>
<evidence type="ECO:0000303" key="11">
    <source>
    </source>
</evidence>
<evidence type="ECO:0000303" key="12">
    <source>
    </source>
</evidence>
<evidence type="ECO:0000305" key="13"/>
<evidence type="ECO:0000312" key="14">
    <source>
        <dbReference type="Araport" id="AT5G05410"/>
    </source>
</evidence>
<evidence type="ECO:0000312" key="15">
    <source>
        <dbReference type="EMBL" id="BAB09984.1"/>
    </source>
</evidence>
<evidence type="ECO:0007829" key="16">
    <source>
        <dbReference type="PDB" id="5OAP"/>
    </source>
</evidence>
<dbReference type="EMBL" id="AB007790">
    <property type="protein sequence ID" value="BAA33794.1"/>
    <property type="molecule type" value="mRNA"/>
</dbReference>
<dbReference type="EMBL" id="AB016570">
    <property type="protein sequence ID" value="BAA36705.1"/>
    <property type="molecule type" value="Genomic_DNA"/>
</dbReference>
<dbReference type="EMBL" id="AB010692">
    <property type="protein sequence ID" value="BAB09984.1"/>
    <property type="molecule type" value="Genomic_DNA"/>
</dbReference>
<dbReference type="EMBL" id="CP002688">
    <property type="protein sequence ID" value="AED90870.1"/>
    <property type="molecule type" value="Genomic_DNA"/>
</dbReference>
<dbReference type="EMBL" id="AY063972">
    <property type="protein sequence ID" value="AAL36328.1"/>
    <property type="molecule type" value="mRNA"/>
</dbReference>
<dbReference type="EMBL" id="AY691903">
    <property type="protein sequence ID" value="AAU93685.1"/>
    <property type="status" value="ALT_SEQ"/>
    <property type="molecule type" value="Genomic_DNA"/>
</dbReference>
<dbReference type="PIR" id="T51833">
    <property type="entry name" value="T51833"/>
</dbReference>
<dbReference type="RefSeq" id="NP_196160.1">
    <molecule id="O82132-1"/>
    <property type="nucleotide sequence ID" value="NM_120623.3"/>
</dbReference>
<dbReference type="PDB" id="5OAP">
    <property type="method" value="NMR"/>
    <property type="chains" value="A=255-272"/>
</dbReference>
<dbReference type="PDBsum" id="5OAP"/>
<dbReference type="SMR" id="O82132"/>
<dbReference type="BioGRID" id="15703">
    <property type="interactions" value="11"/>
</dbReference>
<dbReference type="DIP" id="DIP-40571N"/>
<dbReference type="FunCoup" id="O82132">
    <property type="interactions" value="15"/>
</dbReference>
<dbReference type="IntAct" id="O82132">
    <property type="interactions" value="33"/>
</dbReference>
<dbReference type="STRING" id="3702.O82132"/>
<dbReference type="PaxDb" id="3702-AT5G05410.1"/>
<dbReference type="EnsemblPlants" id="AT5G05410.1">
    <molecule id="O82132-1"/>
    <property type="protein sequence ID" value="AT5G05410.1"/>
    <property type="gene ID" value="AT5G05410"/>
</dbReference>
<dbReference type="GeneID" id="830424"/>
<dbReference type="Gramene" id="AT5G05410.1">
    <molecule id="O82132-1"/>
    <property type="protein sequence ID" value="AT5G05410.1"/>
    <property type="gene ID" value="AT5G05410"/>
</dbReference>
<dbReference type="KEGG" id="ath:AT5G05410"/>
<dbReference type="Araport" id="AT5G05410"/>
<dbReference type="TAIR" id="AT5G05410">
    <property type="gene designation" value="DREB2A"/>
</dbReference>
<dbReference type="eggNOG" id="ENOG502QTBU">
    <property type="taxonomic scope" value="Eukaryota"/>
</dbReference>
<dbReference type="InParanoid" id="O82132"/>
<dbReference type="OMA" id="NGAYTHE"/>
<dbReference type="PhylomeDB" id="O82132"/>
<dbReference type="PRO" id="PR:O82132"/>
<dbReference type="Proteomes" id="UP000006548">
    <property type="component" value="Chromosome 5"/>
</dbReference>
<dbReference type="ExpressionAtlas" id="O82132">
    <property type="expression patterns" value="baseline and differential"/>
</dbReference>
<dbReference type="GO" id="GO:0005634">
    <property type="term" value="C:nucleus"/>
    <property type="evidence" value="ECO:0000314"/>
    <property type="project" value="UniProtKB"/>
</dbReference>
<dbReference type="GO" id="GO:0003700">
    <property type="term" value="F:DNA-binding transcription factor activity"/>
    <property type="evidence" value="ECO:0000314"/>
    <property type="project" value="TAIR"/>
</dbReference>
<dbReference type="GO" id="GO:0000976">
    <property type="term" value="F:transcription cis-regulatory region binding"/>
    <property type="evidence" value="ECO:0000353"/>
    <property type="project" value="TAIR"/>
</dbReference>
<dbReference type="GO" id="GO:0071456">
    <property type="term" value="P:cellular response to hypoxia"/>
    <property type="evidence" value="ECO:0007007"/>
    <property type="project" value="TAIR"/>
</dbReference>
<dbReference type="GO" id="GO:0010286">
    <property type="term" value="P:heat acclimation"/>
    <property type="evidence" value="ECO:0000270"/>
    <property type="project" value="TAIR"/>
</dbReference>
<dbReference type="GO" id="GO:0045893">
    <property type="term" value="P:positive regulation of DNA-templated transcription"/>
    <property type="evidence" value="ECO:0000314"/>
    <property type="project" value="UniProtKB"/>
</dbReference>
<dbReference type="GO" id="GO:0009408">
    <property type="term" value="P:response to heat"/>
    <property type="evidence" value="ECO:0000314"/>
    <property type="project" value="UniProtKB"/>
</dbReference>
<dbReference type="GO" id="GO:0042542">
    <property type="term" value="P:response to hydrogen peroxide"/>
    <property type="evidence" value="ECO:0000270"/>
    <property type="project" value="TAIR"/>
</dbReference>
<dbReference type="GO" id="GO:0010224">
    <property type="term" value="P:response to UV-B"/>
    <property type="evidence" value="ECO:0000316"/>
    <property type="project" value="TAIR"/>
</dbReference>
<dbReference type="GO" id="GO:0009414">
    <property type="term" value="P:response to water deprivation"/>
    <property type="evidence" value="ECO:0000315"/>
    <property type="project" value="TAIR"/>
</dbReference>
<dbReference type="CDD" id="cd00018">
    <property type="entry name" value="AP2"/>
    <property type="match status" value="1"/>
</dbReference>
<dbReference type="DisProt" id="DP02209"/>
<dbReference type="FunFam" id="3.30.730.10:FF:000001">
    <property type="entry name" value="Ethylene-responsive transcription factor 2"/>
    <property type="match status" value="1"/>
</dbReference>
<dbReference type="Gene3D" id="3.30.730.10">
    <property type="entry name" value="AP2/ERF domain"/>
    <property type="match status" value="1"/>
</dbReference>
<dbReference type="InterPro" id="IPR001471">
    <property type="entry name" value="AP2/ERF_dom"/>
</dbReference>
<dbReference type="InterPro" id="IPR036955">
    <property type="entry name" value="AP2/ERF_dom_sf"/>
</dbReference>
<dbReference type="InterPro" id="IPR016177">
    <property type="entry name" value="DNA-bd_dom_sf"/>
</dbReference>
<dbReference type="PANTHER" id="PTHR31241:SF37">
    <property type="entry name" value="DEHYDRATION-RESPONSIVE ELEMENT-BINDING PROTEIN 2A-RELATED"/>
    <property type="match status" value="1"/>
</dbReference>
<dbReference type="PANTHER" id="PTHR31241">
    <property type="entry name" value="DEHYDRATION-RESPONSIVE ELEMENT-BINDING PROTEIN 2C"/>
    <property type="match status" value="1"/>
</dbReference>
<dbReference type="Pfam" id="PF00847">
    <property type="entry name" value="AP2"/>
    <property type="match status" value="1"/>
</dbReference>
<dbReference type="PRINTS" id="PR00367">
    <property type="entry name" value="ETHRSPELEMNT"/>
</dbReference>
<dbReference type="SMART" id="SM00380">
    <property type="entry name" value="AP2"/>
    <property type="match status" value="1"/>
</dbReference>
<dbReference type="SUPFAM" id="SSF54171">
    <property type="entry name" value="DNA-binding domain"/>
    <property type="match status" value="1"/>
</dbReference>
<dbReference type="PROSITE" id="PS51032">
    <property type="entry name" value="AP2_ERF"/>
    <property type="match status" value="1"/>
</dbReference>
<keyword id="KW-0002">3D-structure</keyword>
<keyword id="KW-0010">Activator</keyword>
<keyword id="KW-0025">Alternative splicing</keyword>
<keyword id="KW-0238">DNA-binding</keyword>
<keyword id="KW-0539">Nucleus</keyword>
<keyword id="KW-1185">Reference proteome</keyword>
<keyword id="KW-0346">Stress response</keyword>
<keyword id="KW-0804">Transcription</keyword>
<keyword id="KW-0805">Transcription regulation</keyword>
<keyword id="KW-0832">Ubl conjugation</keyword>
<proteinExistence type="evidence at protein level"/>
<reference key="1">
    <citation type="journal article" date="1998" name="Plant Cell">
        <title>Two transcription factors, DREB1 and DREB2, with an EREBP/AP2 DNA binding domain separate two cellular signal transduction pathways in drought- and low-temperature-responsive gene expression, respectively, in Arabidopsis.</title>
        <authorList>
            <person name="Liu Q."/>
            <person name="Kasuga M."/>
            <person name="Sakuma Y."/>
            <person name="Abe H."/>
            <person name="Miura S."/>
            <person name="Yamaguchi-Shinozaki K."/>
            <person name="Shinozaki K."/>
        </authorList>
    </citation>
    <scope>NUCLEOTIDE SEQUENCE [MRNA]</scope>
    <scope>TISSUE SPECIFICITY</scope>
    <scope>INDUCTION</scope>
    <source>
        <strain>cv. Columbia</strain>
    </source>
</reference>
<reference key="2">
    <citation type="journal article" date="2000" name="Plant Mol. Biol.">
        <title>Organization and expression of two Arabidopsis DREB2 genes encoding DRE-binding proteins involved in dehydration- and high-salinity-responsive gene expression.</title>
        <authorList>
            <person name="Nakashima K."/>
            <person name="Shinwari Z.K."/>
            <person name="Sakuma Y."/>
            <person name="Seki M."/>
            <person name="Miura S."/>
            <person name="Shinozaki K."/>
            <person name="Yamaguchi-Shinozaki K."/>
        </authorList>
    </citation>
    <scope>NUCLEOTIDE SEQUENCE [GENOMIC DNA]</scope>
    <scope>TISSUE SPECIFICITY</scope>
    <scope>INDUCTION</scope>
    <source>
        <strain>cv. Columbia</strain>
    </source>
</reference>
<reference key="3">
    <citation type="journal article" date="1998" name="DNA Res.">
        <title>Structural analysis of Arabidopsis thaliana chromosome 5. V. Sequence features of the regions of 1,381,565 bp covered by twenty one physically assigned P1 and TAC clones.</title>
        <authorList>
            <person name="Kaneko T."/>
            <person name="Kotani H."/>
            <person name="Nakamura Y."/>
            <person name="Sato S."/>
            <person name="Asamizu E."/>
            <person name="Miyajima N."/>
            <person name="Tabata S."/>
        </authorList>
    </citation>
    <scope>NUCLEOTIDE SEQUENCE [LARGE SCALE GENOMIC DNA]</scope>
    <source>
        <strain>cv. Columbia</strain>
    </source>
</reference>
<reference key="4">
    <citation type="journal article" date="2017" name="Plant J.">
        <title>Araport11: a complete reannotation of the Arabidopsis thaliana reference genome.</title>
        <authorList>
            <person name="Cheng C.Y."/>
            <person name="Krishnakumar V."/>
            <person name="Chan A.P."/>
            <person name="Thibaud-Nissen F."/>
            <person name="Schobel S."/>
            <person name="Town C.D."/>
        </authorList>
    </citation>
    <scope>GENOME REANNOTATION</scope>
    <source>
        <strain>cv. Columbia</strain>
    </source>
</reference>
<reference key="5">
    <citation type="journal article" date="2003" name="Science">
        <title>Empirical analysis of transcriptional activity in the Arabidopsis genome.</title>
        <authorList>
            <person name="Yamada K."/>
            <person name="Lim J."/>
            <person name="Dale J.M."/>
            <person name="Chen H."/>
            <person name="Shinn P."/>
            <person name="Palm C.J."/>
            <person name="Southwick A.M."/>
            <person name="Wu H.C."/>
            <person name="Kim C.J."/>
            <person name="Nguyen M."/>
            <person name="Pham P.K."/>
            <person name="Cheuk R.F."/>
            <person name="Karlin-Newmann G."/>
            <person name="Liu S.X."/>
            <person name="Lam B."/>
            <person name="Sakano H."/>
            <person name="Wu T."/>
            <person name="Yu G."/>
            <person name="Miranda M."/>
            <person name="Quach H.L."/>
            <person name="Tripp M."/>
            <person name="Chang C.H."/>
            <person name="Lee J.M."/>
            <person name="Toriumi M.J."/>
            <person name="Chan M.M."/>
            <person name="Tang C.C."/>
            <person name="Onodera C.S."/>
            <person name="Deng J.M."/>
            <person name="Akiyama K."/>
            <person name="Ansari Y."/>
            <person name="Arakawa T."/>
            <person name="Banh J."/>
            <person name="Banno F."/>
            <person name="Bowser L."/>
            <person name="Brooks S.Y."/>
            <person name="Carninci P."/>
            <person name="Chao Q."/>
            <person name="Choy N."/>
            <person name="Enju A."/>
            <person name="Goldsmith A.D."/>
            <person name="Gurjal M."/>
            <person name="Hansen N.F."/>
            <person name="Hayashizaki Y."/>
            <person name="Johnson-Hopson C."/>
            <person name="Hsuan V.W."/>
            <person name="Iida K."/>
            <person name="Karnes M."/>
            <person name="Khan S."/>
            <person name="Koesema E."/>
            <person name="Ishida J."/>
            <person name="Jiang P.X."/>
            <person name="Jones T."/>
            <person name="Kawai J."/>
            <person name="Kamiya A."/>
            <person name="Meyers C."/>
            <person name="Nakajima M."/>
            <person name="Narusaka M."/>
            <person name="Seki M."/>
            <person name="Sakurai T."/>
            <person name="Satou M."/>
            <person name="Tamse R."/>
            <person name="Vaysberg M."/>
            <person name="Wallender E.K."/>
            <person name="Wong C."/>
            <person name="Yamamura Y."/>
            <person name="Yuan S."/>
            <person name="Shinozaki K."/>
            <person name="Davis R.W."/>
            <person name="Theologis A."/>
            <person name="Ecker J.R."/>
        </authorList>
    </citation>
    <scope>NUCLEOTIDE SEQUENCE [LARGE SCALE MRNA]</scope>
    <source>
        <strain>cv. Columbia</strain>
    </source>
</reference>
<reference key="6">
    <citation type="submission" date="2004-07" db="EMBL/GenBank/DDBJ databases">
        <authorList>
            <person name="Zhou R.Y."/>
            <person name="Sun Z.X."/>
        </authorList>
    </citation>
    <scope>NUCLEOTIDE SEQUENCE [GENOMIC DNA] OF 1-167</scope>
</reference>
<reference key="7">
    <citation type="journal article" date="2002" name="Biochem. Biophys. Res. Commun.">
        <title>DNA-binding specificity of the ERF/AP2 domain of Arabidopsis DREBs, transcription factors involved in dehydration- and cold-inducible gene expression.</title>
        <authorList>
            <person name="Sakuma Y."/>
            <person name="Liu Q."/>
            <person name="Dubouzet J.G."/>
            <person name="Abe H."/>
            <person name="Shinozaki K."/>
            <person name="Yamaguchi-Shinozaki K."/>
        </authorList>
    </citation>
    <scope>GENE FAMILY</scope>
    <scope>FUNCTION</scope>
    <scope>INDUCTION</scope>
    <scope>MUTAGENESIS OF VAL-91 AND GLU-96</scope>
</reference>
<reference key="8">
    <citation type="journal article" date="2006" name="Plant Physiol.">
        <title>Genome-wide analysis of the ERF gene family in Arabidopsis and rice.</title>
        <authorList>
            <person name="Nakano T."/>
            <person name="Suzuki K."/>
            <person name="Fujimura T."/>
            <person name="Shinshi H."/>
        </authorList>
    </citation>
    <scope>GENE FAMILY</scope>
    <scope>NOMENCLATURE</scope>
</reference>
<reference key="9">
    <citation type="journal article" date="2008" name="Plant Cell">
        <title>Arabidopsis DREB2A-interacting proteins function as RING E3 ligases and negatively regulate plant drought stress-responsive gene expression.</title>
        <authorList>
            <person name="Qin F."/>
            <person name="Sakuma Y."/>
            <person name="Tran L.-S.H."/>
            <person name="Maruyama K."/>
            <person name="Kidokoro S."/>
            <person name="Fujita Y."/>
            <person name="Fujita M."/>
            <person name="Umezawa T."/>
            <person name="Sawano Y."/>
            <person name="Miyazono K."/>
            <person name="Tanokura M."/>
            <person name="Shinozaki K."/>
            <person name="Yamaguchi-Shinozaki K."/>
        </authorList>
    </citation>
    <scope>INTERACTION WITH DRIP1 AND DRIP2</scope>
    <scope>SUBCELLULAR LOCATION</scope>
    <scope>UBIQUITINATION</scope>
</reference>
<reference key="10">
    <citation type="journal article" date="2011" name="Proc. Natl. Acad. Sci. U.S.A.">
        <title>The Arabidopsis thaliana Med25 mediator subunit integrates environmental cues to control plant development.</title>
        <authorList>
            <person name="Elfving N."/>
            <person name="Davoine C."/>
            <person name="Benlloch R."/>
            <person name="Blomberg J."/>
            <person name="Braennstroem K."/>
            <person name="Mueller D."/>
            <person name="Nilsson A."/>
            <person name="Ulfstedt M."/>
            <person name="Ronne H."/>
            <person name="Wingsle G."/>
            <person name="Nilsson O."/>
            <person name="Bjoerklund S."/>
        </authorList>
    </citation>
    <scope>INTERACTION WITH MED25</scope>
</reference>
<reference key="11">
    <citation type="journal article" date="2014" name="Plant Cell">
        <title>Arabidopsis DPB3-1, a DREB2A interactor, specifically enhances heat stress-induced gene expression by forming a heat stress-specific transcriptional complex with NF-Y subunits.</title>
        <authorList>
            <person name="Sato H."/>
            <person name="Mizoi J."/>
            <person name="Tanaka H."/>
            <person name="Maruyama K."/>
            <person name="Qin F."/>
            <person name="Osakabe Y."/>
            <person name="Morimoto K."/>
            <person name="Ohori T."/>
            <person name="Kusakabe K."/>
            <person name="Nagata M."/>
            <person name="Shinozaki K."/>
            <person name="Yamaguchi-Shinozaki K."/>
        </authorList>
    </citation>
    <scope>FUNCTION</scope>
    <scope>INTERACTION WITH DPB3-1</scope>
    <scope>SUBCELLULAR LOCATION</scope>
    <source>
        <strain>cv. Columbia</strain>
    </source>
</reference>
<gene>
    <name evidence="10 12" type="primary">DREB2A</name>
    <name evidence="11" type="synonym">ERF045</name>
    <name evidence="14" type="ordered locus">At5g05410</name>
    <name evidence="15" type="ORF">K18I23.22</name>
</gene>
<protein>
    <recommendedName>
        <fullName evidence="10 12">Dehydration-responsive element-binding protein 2A</fullName>
        <shortName evidence="10 12">Protein DREB2A</shortName>
    </recommendedName>
</protein>
<name>DRE2A_ARATH</name>
<accession>O82132</accession>
<accession>Q5Y4C5</accession>
<organism>
    <name type="scientific">Arabidopsis thaliana</name>
    <name type="common">Mouse-ear cress</name>
    <dbReference type="NCBI Taxonomy" id="3702"/>
    <lineage>
        <taxon>Eukaryota</taxon>
        <taxon>Viridiplantae</taxon>
        <taxon>Streptophyta</taxon>
        <taxon>Embryophyta</taxon>
        <taxon>Tracheophyta</taxon>
        <taxon>Spermatophyta</taxon>
        <taxon>Magnoliopsida</taxon>
        <taxon>eudicotyledons</taxon>
        <taxon>Gunneridae</taxon>
        <taxon>Pentapetalae</taxon>
        <taxon>rosids</taxon>
        <taxon>malvids</taxon>
        <taxon>Brassicales</taxon>
        <taxon>Brassicaceae</taxon>
        <taxon>Camelineae</taxon>
        <taxon>Arabidopsis</taxon>
    </lineage>
</organism>
<comment type="function">
    <text evidence="5 8">Transcriptional activator that binds specifically to the DNA sequence 5'-[AG]CCGAC-3' (PubMed:11798174). Binding to the C-repeat/DRE element mediates high salinity- and dehydration-inducible transcription (PubMed:11798174). Promotes the expression of heat stress-inducible genes by contributing to the formation of a heat stress-specific transcriptional complex with NF-Y subunits (e.g. DPB3-1, NF-YA2 and NF-YB3) at the promoter of target genes, thus promoting heat tolerance (PubMed:25490919).</text>
</comment>
<comment type="subunit">
    <text evidence="6 7 8">Interacts with MED25 (PubMed:18552202, PubMed:21536906). Binds to DPB3-1 in the nucleus during heat-stress (PubMed:25490919).</text>
</comment>
<comment type="interaction">
    <interactant intactId="EBI-1786840">
        <id>O82132</id>
    </interactant>
    <interactant intactId="EBI-25512274">
        <id>A0SVK0</id>
        <label>DOG1</label>
    </interactant>
    <organismsDiffer>false</organismsDiffer>
    <experiments>3</experiments>
</comment>
<comment type="interaction">
    <interactant intactId="EBI-1786840">
        <id>O82132</id>
    </interactant>
    <interactant intactId="EBI-1786858">
        <id>Q9M9Y4</id>
        <label>DRIP1</label>
    </interactant>
    <organismsDiffer>false</organismsDiffer>
    <experiments>4</experiments>
</comment>
<comment type="interaction">
    <interactant intactId="EBI-1786840">
        <id>O82132</id>
    </interactant>
    <interactant intactId="EBI-4431755">
        <id>Q9FWY7</id>
        <label>IMPA6</label>
    </interactant>
    <organismsDiffer>false</organismsDiffer>
    <experiments>3</experiments>
</comment>
<comment type="interaction">
    <interactant intactId="EBI-1786840">
        <id>O82132</id>
    </interactant>
    <interactant intactId="EBI-15924435">
        <id>Q7XYY2-1</id>
        <label>MED25</label>
    </interactant>
    <organismsDiffer>false</organismsDiffer>
    <experiments>3</experiments>
</comment>
<comment type="interaction">
    <interactant intactId="EBI-1786840">
        <id>O82132</id>
    </interactant>
    <interactant intactId="EBI-2118043">
        <id>Q8RY59</id>
        <label>RCD1</label>
    </interactant>
    <organismsDiffer>false</organismsDiffer>
    <experiments>3</experiments>
</comment>
<comment type="subcellular location">
    <subcellularLocation>
        <location evidence="2 6 8">Nucleus</location>
    </subcellularLocation>
</comment>
<comment type="alternative products">
    <event type="alternative splicing"/>
    <isoform>
        <id>O82132-1</id>
        <name>1</name>
        <sequence type="displayed"/>
    </isoform>
    <text>A number of isoforms are produced. According to EST sequences.</text>
</comment>
<comment type="tissue specificity">
    <text evidence="4 9">Expressed preferentially in roots and stems, and at a lower level in leaves.</text>
</comment>
<comment type="induction">
    <text evidence="4 5 9">By high-salt and drought stresses.</text>
</comment>
<comment type="PTM">
    <text evidence="6">Ubiquitinated by DRIP1 and DRIP2. Ubiquitination probably leads to its subsequent degradation, thus negatively regulating response to drought.</text>
</comment>
<comment type="similarity">
    <text evidence="13">Belongs to the AP2/ERF transcription factor family. ERF subfamily.</text>
</comment>
<comment type="sequence caution" evidence="13">
    <conflict type="erroneous gene model prediction">
        <sequence resource="EMBL-CDS" id="AAU93685"/>
    </conflict>
</comment>
<feature type="chain" id="PRO_0000112534" description="Dehydration-responsive element-binding protein 2A">
    <location>
        <begin position="1"/>
        <end position="335"/>
    </location>
</feature>
<feature type="DNA-binding region" description="AP2/ERF" evidence="2">
    <location>
        <begin position="78"/>
        <end position="135"/>
    </location>
</feature>
<feature type="region of interest" description="Disordered" evidence="3">
    <location>
        <begin position="1"/>
        <end position="32"/>
    </location>
</feature>
<feature type="region of interest" description="Disordered" evidence="3">
    <location>
        <begin position="50"/>
        <end position="74"/>
    </location>
</feature>
<feature type="region of interest" description="Disordered" evidence="3">
    <location>
        <begin position="279"/>
        <end position="304"/>
    </location>
</feature>
<feature type="short sequence motif" description="Nuclear localization signal" evidence="1">
    <location>
        <begin position="19"/>
        <end position="55"/>
    </location>
</feature>
<feature type="compositionally biased region" description="Basic residues" evidence="3">
    <location>
        <begin position="52"/>
        <end position="66"/>
    </location>
</feature>
<feature type="compositionally biased region" description="Polar residues" evidence="3">
    <location>
        <begin position="286"/>
        <end position="304"/>
    </location>
</feature>
<feature type="mutagenesis site" description="Affects the binding to the CRT/DRE cis-element." evidence="5">
    <original>V</original>
    <variation>A</variation>
    <location>
        <position position="91"/>
    </location>
</feature>
<feature type="mutagenesis site" description="Affects the binding to the CRT/DRE cis-element." evidence="5">
    <original>E</original>
    <variation>D</variation>
    <location>
        <position position="96"/>
    </location>
</feature>
<feature type="sequence conflict" description="In Ref. 6; AAU93685." evidence="13" ref="6">
    <original>V</original>
    <variation>M</variation>
    <location>
        <position position="162"/>
    </location>
</feature>
<feature type="helix" evidence="16">
    <location>
        <begin position="261"/>
        <end position="270"/>
    </location>
</feature>